<sequence>MKLDGYTRLAAVVANPIKHSISPFIHNRAFEATATNGAYVAWEIEASDLAETVANIRRYQMFGINLSMPYKEQVIPYLDELSDEARLIGAVNTVVNENGNLIGYNTDGKGFFKCLPSFTISGKKMTLLGAGGAAKSILAQAILDGVSQISVFVRSVSMEKTRPYLDKLQEQTGFKVDLCALEYVSELQARIAESDLLVNATSVGMDGQSSPVPENIVLPETLLVADIIYQPFETPFLKWARSQGNPAVNGLGMLLYQAAEAFQLWTGKEMPTEEIWQSLTEKYQ</sequence>
<evidence type="ECO:0000255" key="1">
    <source>
        <dbReference type="HAMAP-Rule" id="MF_00222"/>
    </source>
</evidence>
<feature type="chain" id="PRO_1000100146" description="Shikimate dehydrogenase (NADP(+))">
    <location>
        <begin position="1"/>
        <end position="284"/>
    </location>
</feature>
<feature type="active site" description="Proton acceptor" evidence="1">
    <location>
        <position position="71"/>
    </location>
</feature>
<feature type="binding site" evidence="1">
    <location>
        <begin position="20"/>
        <end position="22"/>
    </location>
    <ligand>
        <name>shikimate</name>
        <dbReference type="ChEBI" id="CHEBI:36208"/>
    </ligand>
</feature>
<feature type="binding site" evidence="1">
    <location>
        <position position="67"/>
    </location>
    <ligand>
        <name>shikimate</name>
        <dbReference type="ChEBI" id="CHEBI:36208"/>
    </ligand>
</feature>
<feature type="binding site" evidence="1">
    <location>
        <position position="83"/>
    </location>
    <ligand>
        <name>NADP(+)</name>
        <dbReference type="ChEBI" id="CHEBI:58349"/>
    </ligand>
</feature>
<feature type="binding site" evidence="1">
    <location>
        <position position="92"/>
    </location>
    <ligand>
        <name>shikimate</name>
        <dbReference type="ChEBI" id="CHEBI:36208"/>
    </ligand>
</feature>
<feature type="binding site" evidence="1">
    <location>
        <position position="107"/>
    </location>
    <ligand>
        <name>shikimate</name>
        <dbReference type="ChEBI" id="CHEBI:36208"/>
    </ligand>
</feature>
<feature type="binding site" evidence="1">
    <location>
        <begin position="129"/>
        <end position="133"/>
    </location>
    <ligand>
        <name>NADP(+)</name>
        <dbReference type="ChEBI" id="CHEBI:58349"/>
    </ligand>
</feature>
<feature type="binding site" evidence="1">
    <location>
        <position position="227"/>
    </location>
    <ligand>
        <name>NADP(+)</name>
        <dbReference type="ChEBI" id="CHEBI:58349"/>
    </ligand>
</feature>
<feature type="binding site" evidence="1">
    <location>
        <position position="229"/>
    </location>
    <ligand>
        <name>shikimate</name>
        <dbReference type="ChEBI" id="CHEBI:36208"/>
    </ligand>
</feature>
<feature type="binding site" evidence="1">
    <location>
        <position position="250"/>
    </location>
    <ligand>
        <name>NADP(+)</name>
        <dbReference type="ChEBI" id="CHEBI:58349"/>
    </ligand>
</feature>
<comment type="function">
    <text evidence="1">Involved in the biosynthesis of the chorismate, which leads to the biosynthesis of aromatic amino acids. Catalyzes the reversible NADPH linked reduction of 3-dehydroshikimate (DHSA) to yield shikimate (SA).</text>
</comment>
<comment type="catalytic activity">
    <reaction evidence="1">
        <text>shikimate + NADP(+) = 3-dehydroshikimate + NADPH + H(+)</text>
        <dbReference type="Rhea" id="RHEA:17737"/>
        <dbReference type="ChEBI" id="CHEBI:15378"/>
        <dbReference type="ChEBI" id="CHEBI:16630"/>
        <dbReference type="ChEBI" id="CHEBI:36208"/>
        <dbReference type="ChEBI" id="CHEBI:57783"/>
        <dbReference type="ChEBI" id="CHEBI:58349"/>
        <dbReference type="EC" id="1.1.1.25"/>
    </reaction>
</comment>
<comment type="pathway">
    <text evidence="1">Metabolic intermediate biosynthesis; chorismate biosynthesis; chorismate from D-erythrose 4-phosphate and phosphoenolpyruvate: step 4/7.</text>
</comment>
<comment type="subunit">
    <text evidence="1">Homodimer.</text>
</comment>
<comment type="similarity">
    <text evidence="1">Belongs to the shikimate dehydrogenase family.</text>
</comment>
<protein>
    <recommendedName>
        <fullName evidence="1">Shikimate dehydrogenase (NADP(+))</fullName>
        <shortName evidence="1">SDH</shortName>
        <ecNumber evidence="1">1.1.1.25</ecNumber>
    </recommendedName>
</protein>
<gene>
    <name evidence="1" type="primary">aroE</name>
    <name type="ordered locus">SPCG_1366</name>
</gene>
<keyword id="KW-0028">Amino-acid biosynthesis</keyword>
<keyword id="KW-0057">Aromatic amino acid biosynthesis</keyword>
<keyword id="KW-0521">NADP</keyword>
<keyword id="KW-0560">Oxidoreductase</keyword>
<dbReference type="EC" id="1.1.1.25" evidence="1"/>
<dbReference type="EMBL" id="CP001033">
    <property type="protein sequence ID" value="ACB90618.1"/>
    <property type="molecule type" value="Genomic_DNA"/>
</dbReference>
<dbReference type="RefSeq" id="WP_000762472.1">
    <property type="nucleotide sequence ID" value="NC_010582.1"/>
</dbReference>
<dbReference type="SMR" id="B2IQJ4"/>
<dbReference type="KEGG" id="spw:SPCG_1366"/>
<dbReference type="HOGENOM" id="CLU_044063_4_4_9"/>
<dbReference type="UniPathway" id="UPA00053">
    <property type="reaction ID" value="UER00087"/>
</dbReference>
<dbReference type="GO" id="GO:0050661">
    <property type="term" value="F:NADP binding"/>
    <property type="evidence" value="ECO:0007669"/>
    <property type="project" value="InterPro"/>
</dbReference>
<dbReference type="GO" id="GO:0004764">
    <property type="term" value="F:shikimate 3-dehydrogenase (NADP+) activity"/>
    <property type="evidence" value="ECO:0007669"/>
    <property type="project" value="UniProtKB-UniRule"/>
</dbReference>
<dbReference type="GO" id="GO:0008652">
    <property type="term" value="P:amino acid biosynthetic process"/>
    <property type="evidence" value="ECO:0007669"/>
    <property type="project" value="UniProtKB-KW"/>
</dbReference>
<dbReference type="GO" id="GO:0009073">
    <property type="term" value="P:aromatic amino acid family biosynthetic process"/>
    <property type="evidence" value="ECO:0007669"/>
    <property type="project" value="UniProtKB-KW"/>
</dbReference>
<dbReference type="GO" id="GO:0009423">
    <property type="term" value="P:chorismate biosynthetic process"/>
    <property type="evidence" value="ECO:0007669"/>
    <property type="project" value="UniProtKB-UniRule"/>
</dbReference>
<dbReference type="GO" id="GO:0019632">
    <property type="term" value="P:shikimate metabolic process"/>
    <property type="evidence" value="ECO:0007669"/>
    <property type="project" value="InterPro"/>
</dbReference>
<dbReference type="CDD" id="cd01065">
    <property type="entry name" value="NAD_bind_Shikimate_DH"/>
    <property type="match status" value="1"/>
</dbReference>
<dbReference type="FunFam" id="3.40.50.10860:FF:000004">
    <property type="entry name" value="Quinate/shikimate dehydrogenase"/>
    <property type="match status" value="1"/>
</dbReference>
<dbReference type="FunFam" id="3.40.50.720:FF:000505">
    <property type="entry name" value="Shikimate dehydrogenase (NADP(+))"/>
    <property type="match status" value="1"/>
</dbReference>
<dbReference type="Gene3D" id="3.40.50.10860">
    <property type="entry name" value="Leucine Dehydrogenase, chain A, domain 1"/>
    <property type="match status" value="1"/>
</dbReference>
<dbReference type="Gene3D" id="3.40.50.720">
    <property type="entry name" value="NAD(P)-binding Rossmann-like Domain"/>
    <property type="match status" value="1"/>
</dbReference>
<dbReference type="HAMAP" id="MF_00222">
    <property type="entry name" value="Shikimate_DH_AroE"/>
    <property type="match status" value="1"/>
</dbReference>
<dbReference type="InterPro" id="IPR046346">
    <property type="entry name" value="Aminoacid_DH-like_N_sf"/>
</dbReference>
<dbReference type="InterPro" id="IPR036291">
    <property type="entry name" value="NAD(P)-bd_dom_sf"/>
</dbReference>
<dbReference type="InterPro" id="IPR041121">
    <property type="entry name" value="SDH_C"/>
</dbReference>
<dbReference type="InterPro" id="IPR011342">
    <property type="entry name" value="Shikimate_DH"/>
</dbReference>
<dbReference type="InterPro" id="IPR013708">
    <property type="entry name" value="Shikimate_DH-bd_N"/>
</dbReference>
<dbReference type="InterPro" id="IPR022893">
    <property type="entry name" value="Shikimate_DH_fam"/>
</dbReference>
<dbReference type="NCBIfam" id="TIGR00507">
    <property type="entry name" value="aroE"/>
    <property type="match status" value="1"/>
</dbReference>
<dbReference type="NCBIfam" id="NF001315">
    <property type="entry name" value="PRK00258.2-4"/>
    <property type="match status" value="1"/>
</dbReference>
<dbReference type="PANTHER" id="PTHR21089:SF1">
    <property type="entry name" value="BIFUNCTIONAL 3-DEHYDROQUINATE DEHYDRATASE_SHIKIMATE DEHYDROGENASE, CHLOROPLASTIC"/>
    <property type="match status" value="1"/>
</dbReference>
<dbReference type="PANTHER" id="PTHR21089">
    <property type="entry name" value="SHIKIMATE DEHYDROGENASE"/>
    <property type="match status" value="1"/>
</dbReference>
<dbReference type="Pfam" id="PF18317">
    <property type="entry name" value="SDH_C"/>
    <property type="match status" value="1"/>
</dbReference>
<dbReference type="Pfam" id="PF08501">
    <property type="entry name" value="Shikimate_dh_N"/>
    <property type="match status" value="1"/>
</dbReference>
<dbReference type="SUPFAM" id="SSF53223">
    <property type="entry name" value="Aminoacid dehydrogenase-like, N-terminal domain"/>
    <property type="match status" value="1"/>
</dbReference>
<dbReference type="SUPFAM" id="SSF51735">
    <property type="entry name" value="NAD(P)-binding Rossmann-fold domains"/>
    <property type="match status" value="1"/>
</dbReference>
<reference key="1">
    <citation type="journal article" date="2009" name="BMC Genomics">
        <title>Genome evolution driven by host adaptations results in a more virulent and antimicrobial-resistant Streptococcus pneumoniae serotype 14.</title>
        <authorList>
            <person name="Ding F."/>
            <person name="Tang P."/>
            <person name="Hsu M.-H."/>
            <person name="Cui P."/>
            <person name="Hu S."/>
            <person name="Yu J."/>
            <person name="Chiu C.-H."/>
        </authorList>
    </citation>
    <scope>NUCLEOTIDE SEQUENCE [LARGE SCALE GENOMIC DNA]</scope>
    <source>
        <strain>CGSP14</strain>
    </source>
</reference>
<organism>
    <name type="scientific">Streptococcus pneumoniae (strain CGSP14)</name>
    <dbReference type="NCBI Taxonomy" id="516950"/>
    <lineage>
        <taxon>Bacteria</taxon>
        <taxon>Bacillati</taxon>
        <taxon>Bacillota</taxon>
        <taxon>Bacilli</taxon>
        <taxon>Lactobacillales</taxon>
        <taxon>Streptococcaceae</taxon>
        <taxon>Streptococcus</taxon>
    </lineage>
</organism>
<accession>B2IQJ4</accession>
<name>AROE_STRPS</name>
<proteinExistence type="inferred from homology"/>